<gene>
    <name evidence="9 12" type="primary">DDA1</name>
    <name evidence="12" type="synonym">C19orf58</name>
    <name evidence="10" type="synonym">PCIA1</name>
</gene>
<reference key="1">
    <citation type="journal article" date="2007" name="Mol. Cell. Biol.">
        <title>Mammalian DET1 regulates Cul4A Activity and forms stable complexes with E2 ubiquitin-conjugating enzymes.</title>
        <authorList>
            <person name="Pick E."/>
            <person name="Lau O.-S."/>
            <person name="Tsuge T."/>
            <person name="Menon S."/>
            <person name="Tong Y."/>
            <person name="Dohmae N."/>
            <person name="Plafker S.M."/>
            <person name="Deng X.W."/>
            <person name="Wei N."/>
        </authorList>
    </citation>
    <scope>NUCLEOTIDE SEQUENCE [MRNA]</scope>
    <scope>FUNCTION</scope>
    <scope>IDENTIFICATION IN A DDD COMPLEX WITH DET1 AND DDB1</scope>
</reference>
<reference key="2">
    <citation type="submission" date="2004-12" db="EMBL/GenBank/DDBJ databases">
        <title>Identification of placenta cross-immune reaction antigen.</title>
        <authorList>
            <person name="Deng H.-X."/>
            <person name="Wei Y.-Q."/>
            <person name="Zhao X."/>
            <person name="Yang H.-S."/>
            <person name="Yang J.-L."/>
            <person name="Tian L."/>
        </authorList>
    </citation>
    <scope>NUCLEOTIDE SEQUENCE [MRNA]</scope>
    <source>
        <tissue>Placenta</tissue>
    </source>
</reference>
<reference key="3">
    <citation type="submission" date="2005-09" db="EMBL/GenBank/DDBJ databases">
        <authorList>
            <person name="Mural R.J."/>
            <person name="Istrail S."/>
            <person name="Sutton G.G."/>
            <person name="Florea L."/>
            <person name="Halpern A.L."/>
            <person name="Mobarry C.M."/>
            <person name="Lippert R."/>
            <person name="Walenz B."/>
            <person name="Shatkay H."/>
            <person name="Dew I."/>
            <person name="Miller J.R."/>
            <person name="Flanigan M.J."/>
            <person name="Edwards N.J."/>
            <person name="Bolanos R."/>
            <person name="Fasulo D."/>
            <person name="Halldorsson B.V."/>
            <person name="Hannenhalli S."/>
            <person name="Turner R."/>
            <person name="Yooseph S."/>
            <person name="Lu F."/>
            <person name="Nusskern D.R."/>
            <person name="Shue B.C."/>
            <person name="Zheng X.H."/>
            <person name="Zhong F."/>
            <person name="Delcher A.L."/>
            <person name="Huson D.H."/>
            <person name="Kravitz S.A."/>
            <person name="Mouchard L."/>
            <person name="Reinert K."/>
            <person name="Remington K.A."/>
            <person name="Clark A.G."/>
            <person name="Waterman M.S."/>
            <person name="Eichler E.E."/>
            <person name="Adams M.D."/>
            <person name="Hunkapiller M.W."/>
            <person name="Myers E.W."/>
            <person name="Venter J.C."/>
        </authorList>
    </citation>
    <scope>NUCLEOTIDE SEQUENCE [LARGE SCALE GENOMIC DNA]</scope>
</reference>
<reference key="4">
    <citation type="journal article" date="2004" name="Genome Res.">
        <title>The status, quality, and expansion of the NIH full-length cDNA project: the Mammalian Gene Collection (MGC).</title>
        <authorList>
            <consortium name="The MGC Project Team"/>
        </authorList>
    </citation>
    <scope>NUCLEOTIDE SEQUENCE [LARGE SCALE MRNA]</scope>
    <source>
        <tissue>Skin</tissue>
    </source>
</reference>
<reference key="5">
    <citation type="journal article" date="2008" name="Proc. Natl. Acad. Sci. U.S.A.">
        <title>A quantitative atlas of mitotic phosphorylation.</title>
        <authorList>
            <person name="Dephoure N."/>
            <person name="Zhou C."/>
            <person name="Villen J."/>
            <person name="Beausoleil S.A."/>
            <person name="Bakalarski C.E."/>
            <person name="Elledge S.J."/>
            <person name="Gygi S.P."/>
        </authorList>
    </citation>
    <scope>PHOSPHORYLATION [LARGE SCALE ANALYSIS] AT SER-95</scope>
    <scope>IDENTIFICATION BY MASS SPECTROMETRY [LARGE SCALE ANALYSIS]</scope>
    <source>
        <tissue>Cervix carcinoma</tissue>
    </source>
</reference>
<reference key="6">
    <citation type="journal article" date="2010" name="Sci. Signal.">
        <title>Quantitative phosphoproteomics reveals widespread full phosphorylation site occupancy during mitosis.</title>
        <authorList>
            <person name="Olsen J.V."/>
            <person name="Vermeulen M."/>
            <person name="Santamaria A."/>
            <person name="Kumar C."/>
            <person name="Miller M.L."/>
            <person name="Jensen L.J."/>
            <person name="Gnad F."/>
            <person name="Cox J."/>
            <person name="Jensen T.S."/>
            <person name="Nigg E.A."/>
            <person name="Brunak S."/>
            <person name="Mann M."/>
        </authorList>
    </citation>
    <scope>PHOSPHORYLATION [LARGE SCALE ANALYSIS] AT SER-33 AND SER-95</scope>
    <scope>IDENTIFICATION BY MASS SPECTROMETRY [LARGE SCALE ANALYSIS]</scope>
    <source>
        <tissue>Cervix carcinoma</tissue>
    </source>
</reference>
<reference key="7">
    <citation type="journal article" date="2011" name="BMC Syst. Biol.">
        <title>Initial characterization of the human central proteome.</title>
        <authorList>
            <person name="Burkard T.R."/>
            <person name="Planyavsky M."/>
            <person name="Kaupe I."/>
            <person name="Breitwieser F.P."/>
            <person name="Buerckstuemmer T."/>
            <person name="Bennett K.L."/>
            <person name="Superti-Furga G."/>
            <person name="Colinge J."/>
        </authorList>
    </citation>
    <scope>IDENTIFICATION BY MASS SPECTROMETRY [LARGE SCALE ANALYSIS]</scope>
</reference>
<reference key="8">
    <citation type="journal article" date="2011" name="Sci. Signal.">
        <title>System-wide temporal characterization of the proteome and phosphoproteome of human embryonic stem cell differentiation.</title>
        <authorList>
            <person name="Rigbolt K.T."/>
            <person name="Prokhorova T.A."/>
            <person name="Akimov V."/>
            <person name="Henningsen J."/>
            <person name="Johansen P.T."/>
            <person name="Kratchmarova I."/>
            <person name="Kassem M."/>
            <person name="Mann M."/>
            <person name="Olsen J.V."/>
            <person name="Blagoev B."/>
        </authorList>
    </citation>
    <scope>PHOSPHORYLATION [LARGE SCALE ANALYSIS] AT SER-95</scope>
    <scope>IDENTIFICATION BY MASS SPECTROMETRY [LARGE SCALE ANALYSIS]</scope>
</reference>
<reference key="9">
    <citation type="journal article" date="2012" name="Proc. Natl. Acad. Sci. U.S.A.">
        <title>N-terminal acetylome analyses and functional insights of the N-terminal acetyltransferase NatB.</title>
        <authorList>
            <person name="Van Damme P."/>
            <person name="Lasa M."/>
            <person name="Polevoda B."/>
            <person name="Gazquez C."/>
            <person name="Elosegui-Artola A."/>
            <person name="Kim D.S."/>
            <person name="De Juan-Pardo E."/>
            <person name="Demeyer K."/>
            <person name="Hole K."/>
            <person name="Larrea E."/>
            <person name="Timmerman E."/>
            <person name="Prieto J."/>
            <person name="Arnesen T."/>
            <person name="Sherman F."/>
            <person name="Gevaert K."/>
            <person name="Aldabe R."/>
        </authorList>
    </citation>
    <scope>ACETYLATION [LARGE SCALE ANALYSIS] AT ALA-2</scope>
    <scope>CLEAVAGE OF INITIATOR METHIONINE [LARGE SCALE ANALYSIS]</scope>
    <scope>IDENTIFICATION BY MASS SPECTROMETRY [LARGE SCALE ANALYSIS]</scope>
</reference>
<reference key="10">
    <citation type="journal article" date="2013" name="J. Proteome Res.">
        <title>Toward a comprehensive characterization of a human cancer cell phosphoproteome.</title>
        <authorList>
            <person name="Zhou H."/>
            <person name="Di Palma S."/>
            <person name="Preisinger C."/>
            <person name="Peng M."/>
            <person name="Polat A.N."/>
            <person name="Heck A.J."/>
            <person name="Mohammed S."/>
        </authorList>
    </citation>
    <scope>PHOSPHORYLATION [LARGE SCALE ANALYSIS] AT SER-33</scope>
    <scope>IDENTIFICATION BY MASS SPECTROMETRY [LARGE SCALE ANALYSIS]</scope>
    <source>
        <tissue>Cervix carcinoma</tissue>
        <tissue>Erythroleukemia</tissue>
    </source>
</reference>
<reference key="11">
    <citation type="journal article" date="2014" name="J. Proteomics">
        <title>An enzyme assisted RP-RPLC approach for in-depth analysis of human liver phosphoproteome.</title>
        <authorList>
            <person name="Bian Y."/>
            <person name="Song C."/>
            <person name="Cheng K."/>
            <person name="Dong M."/>
            <person name="Wang F."/>
            <person name="Huang J."/>
            <person name="Sun D."/>
            <person name="Wang L."/>
            <person name="Ye M."/>
            <person name="Zou H."/>
        </authorList>
    </citation>
    <scope>PHOSPHORYLATION [LARGE SCALE ANALYSIS] AT SER-33 AND SER-95</scope>
    <scope>IDENTIFICATION BY MASS SPECTROMETRY [LARGE SCALE ANALYSIS]</scope>
    <source>
        <tissue>Liver</tissue>
    </source>
</reference>
<reference key="12">
    <citation type="journal article" date="2017" name="Nat. Chem. Biol.">
        <title>Selective degradation of splicing factor CAPERalpha by anticancer sulfonamides.</title>
        <authorList>
            <person name="Uehara T."/>
            <person name="Minoshima Y."/>
            <person name="Sagane K."/>
            <person name="Sugi N.H."/>
            <person name="Mitsuhashi K.O."/>
            <person name="Yamamoto N."/>
            <person name="Kamiyama H."/>
            <person name="Takahashi K."/>
            <person name="Kotake Y."/>
            <person name="Uesugi M."/>
            <person name="Yokoi A."/>
            <person name="Inoue A."/>
            <person name="Yoshida T."/>
            <person name="Mabuchi M."/>
            <person name="Tanaka A."/>
            <person name="Owa T."/>
        </authorList>
    </citation>
    <scope>FUNCTION</scope>
    <scope>IDENTIFICATION IN THE DCX(DCAF15) COMPLEX</scope>
</reference>
<reference key="13">
    <citation type="journal article" date="2017" name="Science">
        <title>Anticancer sulfonamides target splicing by inducing RBM39 degradation via recruitment to DCAF15.</title>
        <authorList>
            <person name="Han T."/>
            <person name="Goralski M."/>
            <person name="Gaskill N."/>
            <person name="Capota E."/>
            <person name="Kim J."/>
            <person name="Ting T.C."/>
            <person name="Xie Y."/>
            <person name="Williams N.S."/>
            <person name="Nijhawan D."/>
        </authorList>
    </citation>
    <scope>FUNCTION</scope>
    <scope>PATHWAY</scope>
    <scope>IDENTIFICATION IN THE DCX(DCAF15) COMPLEX</scope>
</reference>
<reference key="14">
    <citation type="journal article" date="2017" name="Science">
        <authorList>
            <person name="Han T."/>
            <person name="Goralski M."/>
            <person name="Gaskill N."/>
            <person name="Capota E."/>
            <person name="Kim J."/>
            <person name="Ting T.C."/>
            <person name="Xie Y."/>
            <person name="Williams N.S."/>
            <person name="Nijhawan D."/>
        </authorList>
    </citation>
    <scope>ERRATUM OF PUBMED:28302793</scope>
</reference>
<reference evidence="13" key="15">
    <citation type="journal article" date="2018" name="Cell Discov.">
        <title>Structural insights into DDA1 function as a core component of the CRL4-DDB1 ubiquitin ligase.</title>
        <authorList>
            <person name="Shabek N."/>
            <person name="Ruble J."/>
            <person name="Waston C.J."/>
            <person name="Garbutt K.C."/>
            <person name="Hinds T.R."/>
            <person name="Li T."/>
            <person name="Zheng N."/>
        </authorList>
    </citation>
    <scope>X-RAY CRYSTALLOGRAPHY (3.09 ANGSTROMS) OF 1-19 IN COMPLEX WITH DDB1</scope>
</reference>
<reference key="16">
    <citation type="journal article" date="2019" name="Cell Rep.">
        <title>Aryl sulfonamides degrade RBM39 and RBM23 by recruitment to CRL4-DCAF15.</title>
        <authorList>
            <person name="Ting T.C."/>
            <person name="Goralski M."/>
            <person name="Klein K."/>
            <person name="Wang B."/>
            <person name="Kim J."/>
            <person name="Xie Y."/>
            <person name="Nijhawan D."/>
        </authorList>
    </citation>
    <scope>IDENTIFICATION IN THE DCX(DCAF15) COMPLEX</scope>
</reference>
<reference evidence="15 16 17" key="17">
    <citation type="journal article" date="2020" name="Nat. Chem. Biol.">
        <title>Structural complementarity facilitates E7820-mediated degradation of RBM39 by DCAF15.</title>
        <authorList>
            <person name="Faust T.B."/>
            <person name="Yoon H."/>
            <person name="Nowak R.P."/>
            <person name="Donovan K.A."/>
            <person name="Li Z."/>
            <person name="Cai Q."/>
            <person name="Eleuteri N.A."/>
            <person name="Zhang T."/>
            <person name="Gray N.S."/>
            <person name="Fischer E.S."/>
        </authorList>
    </citation>
    <scope>X-RAY CRYSTALLOGRAPHY (2.9 ANGSTROMS) IN COMPLEX WITH DDB1 AND DCAF15</scope>
    <scope>FUNCTION</scope>
    <scope>IDENTIFICATION IN THE DCX(DCAF15) COMPLEX</scope>
</reference>
<reference evidence="18 19 20" key="18">
    <citation type="journal article" date="2020" name="Nat. Chem. Biol.">
        <title>Structural basis of indisulam-mediated RBM39 recruitment to DCAF15 E3 ligase complex.</title>
        <authorList>
            <person name="Bussiere D.E."/>
            <person name="Xie L."/>
            <person name="Srinivas H."/>
            <person name="Shu W."/>
            <person name="Burke A."/>
            <person name="Be C."/>
            <person name="Zhao J."/>
            <person name="Godbole A."/>
            <person name="King D."/>
            <person name="Karki R.G."/>
            <person name="Hornak V."/>
            <person name="Xu F."/>
            <person name="Cobb J."/>
            <person name="Carte N."/>
            <person name="Frank A.O."/>
            <person name="Frommlet A."/>
            <person name="Graff P."/>
            <person name="Knapp M."/>
            <person name="Fazal A."/>
            <person name="Okram B."/>
            <person name="Jiang S."/>
            <person name="Michellys P.Y."/>
            <person name="Beckwith R."/>
            <person name="Voshol H."/>
            <person name="Wiesmann C."/>
            <person name="Solomon J.M."/>
            <person name="Paulk J."/>
        </authorList>
    </citation>
    <scope>X-RAY CRYSTALLOGRAPHY (2.30 ANGSTROMS) OF 2-102 IN COMPLEX WITH DDB1 AND DCAF15</scope>
    <scope>STRUCTURE BY ELECTRON MICROSCOPY (3.54 ANGSTROMS) OF 2-102 IN COMPLEX WITH DDB1 AND DCAF15</scope>
    <scope>FUNCTION</scope>
    <scope>IDENTIFICATION IN THE DCX(DCAF15) COMPLEX</scope>
</reference>
<reference evidence="14" key="19">
    <citation type="journal article" date="2019" name="Structure">
        <title>Structural basis and kinetic pathway of RBM39 recruitment to DCAF15 by a sulfonamide molecular glue E7820.</title>
        <authorList>
            <person name="Du X."/>
            <person name="Volkov O.A."/>
            <person name="Czerwinski R.M."/>
            <person name="Tan H."/>
            <person name="Huerta C."/>
            <person name="Morton E.R."/>
            <person name="Rizzi J.P."/>
            <person name="Wehn P.M."/>
            <person name="Xu R."/>
            <person name="Nijhawan D."/>
            <person name="Wallace E.M."/>
        </authorList>
    </citation>
    <scope>X-RAY CRYSTALLOGRAPHY (2.90 ANGSTROMS) IN COMPLEX WITH DDB1 AND DCAF15</scope>
    <scope>IDENTIFICATION IN THE DCX(DCAF15) COMPLEX</scope>
</reference>
<keyword id="KW-0002">3D-structure</keyword>
<keyword id="KW-0007">Acetylation</keyword>
<keyword id="KW-0597">Phosphoprotein</keyword>
<keyword id="KW-1267">Proteomics identification</keyword>
<keyword id="KW-1185">Reference proteome</keyword>
<keyword id="KW-0833">Ubl conjugation pathway</keyword>
<proteinExistence type="evidence at protein level"/>
<organism>
    <name type="scientific">Homo sapiens</name>
    <name type="common">Human</name>
    <dbReference type="NCBI Taxonomy" id="9606"/>
    <lineage>
        <taxon>Eukaryota</taxon>
        <taxon>Metazoa</taxon>
        <taxon>Chordata</taxon>
        <taxon>Craniata</taxon>
        <taxon>Vertebrata</taxon>
        <taxon>Euteleostomi</taxon>
        <taxon>Mammalia</taxon>
        <taxon>Eutheria</taxon>
        <taxon>Euarchontoglires</taxon>
        <taxon>Primates</taxon>
        <taxon>Haplorrhini</taxon>
        <taxon>Catarrhini</taxon>
        <taxon>Hominidae</taxon>
        <taxon>Homo</taxon>
    </lineage>
</organism>
<evidence type="ECO:0000256" key="1">
    <source>
        <dbReference type="SAM" id="MobiDB-lite"/>
    </source>
</evidence>
<evidence type="ECO:0000269" key="2">
    <source>
    </source>
</evidence>
<evidence type="ECO:0000269" key="3">
    <source>
    </source>
</evidence>
<evidence type="ECO:0000269" key="4">
    <source>
    </source>
</evidence>
<evidence type="ECO:0000269" key="5">
    <source>
    </source>
</evidence>
<evidence type="ECO:0000269" key="6">
    <source>
    </source>
</evidence>
<evidence type="ECO:0000269" key="7">
    <source>
    </source>
</evidence>
<evidence type="ECO:0000269" key="8">
    <source>
    </source>
</evidence>
<evidence type="ECO:0000303" key="9">
    <source>
    </source>
</evidence>
<evidence type="ECO:0000303" key="10">
    <source ref="2"/>
</evidence>
<evidence type="ECO:0000305" key="11"/>
<evidence type="ECO:0000312" key="12">
    <source>
        <dbReference type="HGNC" id="HGNC:28360"/>
    </source>
</evidence>
<evidence type="ECO:0007744" key="13">
    <source>
        <dbReference type="PDB" id="6DSZ"/>
    </source>
</evidence>
<evidence type="ECO:0007744" key="14">
    <source>
        <dbReference type="PDB" id="6PAI"/>
    </source>
</evidence>
<evidence type="ECO:0007744" key="15">
    <source>
        <dbReference type="PDB" id="6Q0R"/>
    </source>
</evidence>
<evidence type="ECO:0007744" key="16">
    <source>
        <dbReference type="PDB" id="6Q0V"/>
    </source>
</evidence>
<evidence type="ECO:0007744" key="17">
    <source>
        <dbReference type="PDB" id="6Q0W"/>
    </source>
</evidence>
<evidence type="ECO:0007744" key="18">
    <source>
        <dbReference type="PDB" id="6SJ7"/>
    </source>
</evidence>
<evidence type="ECO:0007744" key="19">
    <source>
        <dbReference type="PDB" id="6UD7"/>
    </source>
</evidence>
<evidence type="ECO:0007744" key="20">
    <source>
        <dbReference type="PDB" id="6UE5"/>
    </source>
</evidence>
<evidence type="ECO:0007744" key="21">
    <source>
    </source>
</evidence>
<evidence type="ECO:0007744" key="22">
    <source>
    </source>
</evidence>
<evidence type="ECO:0007744" key="23">
    <source>
    </source>
</evidence>
<evidence type="ECO:0007744" key="24">
    <source>
    </source>
</evidence>
<evidence type="ECO:0007744" key="25">
    <source>
    </source>
</evidence>
<evidence type="ECO:0007744" key="26">
    <source>
    </source>
</evidence>
<evidence type="ECO:0007829" key="27">
    <source>
        <dbReference type="PDB" id="6UD7"/>
    </source>
</evidence>
<evidence type="ECO:0007829" key="28">
    <source>
        <dbReference type="PDB" id="9BZ0"/>
    </source>
</evidence>
<comment type="function">
    <text evidence="2 3 4 5 8">Functions as a component of numerous distinct DCX (DDB1-CUL4-X-box) E3 ubiquitin-protein ligase complexes which mediate the ubiquitination and subsequent proteasomal degradation of target proteins (PubMed:17452440, PubMed:28302793, PubMed:28437394, PubMed:31686031, PubMed:31819272). In the DCX complexes, acts as a scaffolding subunit required to stabilize the complex (PubMed:31686031, PubMed:31819272).</text>
</comment>
<comment type="pathway">
    <text evidence="2 3">Protein modification; protein ubiquitination.</text>
</comment>
<comment type="subunit">
    <text evidence="2 3 4 5 6 7 8">Component of numerous DCX (DDB1-CUL4-X-box) E3 ubiquitin-protein ligase complexes which consist of a core of DDB1, cullin-4 (CUL4A or CUL4B), DDA1 and RBX1 (PubMed:28302793, PubMed:28437394, PubMed:31686031, PubMed:31693891, PubMed:31693911, PubMed:31819272). Component of the DCX(DCAF15) complex, also named CLR4(DCAF15) complex, composed of DCAF15, DDB1, cullin-4 (CUL4A or CUL4B), DDA1 and RBX1 (PubMed:28302793, PubMed:28437394, PubMed:31686031, PubMed:31693891, PubMed:31693911, PubMed:31819272). Part of the DDD core complex containing DET1, DDA1 and DDB1; the DDD core complex recruits a specific UBE2E enzyme, such as UBE2E1, UBE2E2 UBE2E3, to form specific DDD-E2 complexes (PubMed:17452440).</text>
</comment>
<comment type="interaction">
    <interactant intactId="EBI-2510241">
        <id>Q9BW61</id>
    </interactant>
    <interactant intactId="EBI-741181">
        <id>Q6RW13</id>
        <label>AGTRAP</label>
    </interactant>
    <organismsDiffer>false</organismsDiffer>
    <experiments>3</experiments>
</comment>
<comment type="interaction">
    <interactant intactId="EBI-2510241">
        <id>Q9BW61</id>
    </interactant>
    <interactant intactId="EBI-2548702">
        <id>Q96DZ9</id>
        <label>CMTM5</label>
    </interactant>
    <organismsDiffer>false</organismsDiffer>
    <experiments>3</experiments>
</comment>
<comment type="interaction">
    <interactant intactId="EBI-2510241">
        <id>Q9BW61</id>
    </interactant>
    <interactant intactId="EBI-11522780">
        <id>Q96DZ9-2</id>
        <label>CMTM5</label>
    </interactant>
    <organismsDiffer>false</organismsDiffer>
    <experiments>3</experiments>
</comment>
<comment type="interaction">
    <interactant intactId="EBI-2510241">
        <id>Q9BW61</id>
    </interactant>
    <interactant intactId="EBI-350322">
        <id>Q16531</id>
        <label>DDB1</label>
    </interactant>
    <organismsDiffer>false</organismsDiffer>
    <experiments>5</experiments>
</comment>
<comment type="interaction">
    <interactant intactId="EBI-2510241">
        <id>Q9BW61</id>
    </interactant>
    <interactant intactId="EBI-2692890">
        <id>Q96KN3</id>
        <label>PKNOX2</label>
    </interactant>
    <organismsDiffer>false</organismsDiffer>
    <experiments>5</experiments>
</comment>
<comment type="interaction">
    <interactant intactId="EBI-2510241">
        <id>Q9BW61</id>
    </interactant>
    <interactant intactId="EBI-21251460">
        <id>O60260-5</id>
        <label>PRKN</label>
    </interactant>
    <organismsDiffer>false</organismsDiffer>
    <experiments>3</experiments>
</comment>
<comment type="interaction">
    <interactant intactId="EBI-2510241">
        <id>Q9BW61</id>
    </interactant>
    <interactant intactId="EBI-11913715">
        <id>Q8IZV5</id>
        <label>RDH10</label>
    </interactant>
    <organismsDiffer>false</organismsDiffer>
    <experiments>3</experiments>
</comment>
<comment type="similarity">
    <text evidence="11">Belongs to the DDA1 family.</text>
</comment>
<dbReference type="EMBL" id="DQ090952">
    <property type="protein sequence ID" value="AAZ41375.1"/>
    <property type="molecule type" value="mRNA"/>
</dbReference>
<dbReference type="EMBL" id="AY563006">
    <property type="protein sequence ID" value="AAS66629.1"/>
    <property type="molecule type" value="mRNA"/>
</dbReference>
<dbReference type="EMBL" id="CH471106">
    <property type="protein sequence ID" value="EAW84593.1"/>
    <property type="molecule type" value="Genomic_DNA"/>
</dbReference>
<dbReference type="EMBL" id="BC000615">
    <property type="protein sequence ID" value="AAH00615.1"/>
    <property type="molecule type" value="mRNA"/>
</dbReference>
<dbReference type="CCDS" id="CCDS12357.1"/>
<dbReference type="RefSeq" id="NP_076955.1">
    <property type="nucleotide sequence ID" value="NM_024050.6"/>
</dbReference>
<dbReference type="PDB" id="6DSZ">
    <property type="method" value="X-ray"/>
    <property type="resolution" value="3.09 A"/>
    <property type="chains" value="C/D=1-19"/>
</dbReference>
<dbReference type="PDB" id="6PAI">
    <property type="method" value="X-ray"/>
    <property type="resolution" value="2.90 A"/>
    <property type="chains" value="E=1-102"/>
</dbReference>
<dbReference type="PDB" id="6Q0R">
    <property type="method" value="X-ray"/>
    <property type="resolution" value="2.90 A"/>
    <property type="chains" value="E=1-102"/>
</dbReference>
<dbReference type="PDB" id="6Q0V">
    <property type="method" value="X-ray"/>
    <property type="resolution" value="2.90 A"/>
    <property type="chains" value="E=1-102"/>
</dbReference>
<dbReference type="PDB" id="6Q0W">
    <property type="method" value="X-ray"/>
    <property type="resolution" value="2.90 A"/>
    <property type="chains" value="E=1-102"/>
</dbReference>
<dbReference type="PDB" id="6SJ7">
    <property type="method" value="EM"/>
    <property type="resolution" value="3.54 A"/>
    <property type="chains" value="D=2-102"/>
</dbReference>
<dbReference type="PDB" id="6UD7">
    <property type="method" value="X-ray"/>
    <property type="resolution" value="2.30 A"/>
    <property type="chains" value="D=2-102"/>
</dbReference>
<dbReference type="PDB" id="6UE5">
    <property type="method" value="X-ray"/>
    <property type="resolution" value="2.61 A"/>
    <property type="chains" value="D=2-102"/>
</dbReference>
<dbReference type="PDB" id="8G46">
    <property type="method" value="EM"/>
    <property type="resolution" value="2.20 A"/>
    <property type="chains" value="E=1-102"/>
</dbReference>
<dbReference type="PDB" id="8QH5">
    <property type="method" value="EM"/>
    <property type="resolution" value="3.40 A"/>
    <property type="chains" value="C=1-102"/>
</dbReference>
<dbReference type="PDB" id="8ROX">
    <property type="method" value="EM"/>
    <property type="resolution" value="3.30 A"/>
    <property type="chains" value="D=1-102"/>
</dbReference>
<dbReference type="PDB" id="8ROY">
    <property type="method" value="EM"/>
    <property type="resolution" value="3.10 A"/>
    <property type="chains" value="D=1-102"/>
</dbReference>
<dbReference type="PDB" id="8TL6">
    <property type="method" value="EM"/>
    <property type="resolution" value="2.63 A"/>
    <property type="chains" value="E=1-102"/>
</dbReference>
<dbReference type="PDB" id="9BZ0">
    <property type="method" value="EM"/>
    <property type="resolution" value="1.90 A"/>
    <property type="chains" value="e=1-102"/>
</dbReference>
<dbReference type="PDB" id="9DHD">
    <property type="method" value="EM"/>
    <property type="resolution" value="2.90 A"/>
    <property type="chains" value="C=1-102"/>
</dbReference>
<dbReference type="PDB" id="9FD2">
    <property type="method" value="EM"/>
    <property type="resolution" value="3.40 A"/>
    <property type="chains" value="c=1-102"/>
</dbReference>
<dbReference type="PDBsum" id="6DSZ"/>
<dbReference type="PDBsum" id="6PAI"/>
<dbReference type="PDBsum" id="6Q0R"/>
<dbReference type="PDBsum" id="6Q0V"/>
<dbReference type="PDBsum" id="6Q0W"/>
<dbReference type="PDBsum" id="6SJ7"/>
<dbReference type="PDBsum" id="6UD7"/>
<dbReference type="PDBsum" id="6UE5"/>
<dbReference type="PDBsum" id="8G46"/>
<dbReference type="PDBsum" id="8QH5"/>
<dbReference type="PDBsum" id="8ROX"/>
<dbReference type="PDBsum" id="8ROY"/>
<dbReference type="PDBsum" id="8TL6"/>
<dbReference type="PDBsum" id="9BZ0"/>
<dbReference type="PDBsum" id="9DHD"/>
<dbReference type="PDBsum" id="9FD2"/>
<dbReference type="EMDB" id="EMD-10213"/>
<dbReference type="EMDB" id="EMD-18377"/>
<dbReference type="EMDB" id="EMD-18378"/>
<dbReference type="EMDB" id="EMD-18380"/>
<dbReference type="EMDB" id="EMD-18398"/>
<dbReference type="EMDB" id="EMD-18413"/>
<dbReference type="EMDB" id="EMD-19406"/>
<dbReference type="EMDB" id="EMD-19407"/>
<dbReference type="EMDB" id="EMD-29714"/>
<dbReference type="EMDB" id="EMD-41363"/>
<dbReference type="EMDB" id="EMD-44638"/>
<dbReference type="EMDB" id="EMD-45050"/>
<dbReference type="EMDB" id="EMD-46867"/>
<dbReference type="EMDB" id="EMD-50292"/>
<dbReference type="EMDB" id="EMD-50293"/>
<dbReference type="EMDB" id="EMD-50295"/>
<dbReference type="EMDB" id="EMD-50306"/>
<dbReference type="EMDB" id="EMD-50325"/>
<dbReference type="SMR" id="Q9BW61"/>
<dbReference type="BioGRID" id="122485">
    <property type="interactions" value="398"/>
</dbReference>
<dbReference type="ComplexPortal" id="CPX-2765">
    <property type="entry name" value="CRL4-DCAF15 E3 ubiquitin ligase complex, CUL4B variant"/>
</dbReference>
<dbReference type="ComplexPortal" id="CPX-2766">
    <property type="entry name" value="CRL4-DCAF15 E3 ubiquitin ligase complex, CUL4A variant"/>
</dbReference>
<dbReference type="DIP" id="DIP-53527N"/>
<dbReference type="FunCoup" id="Q9BW61">
    <property type="interactions" value="1138"/>
</dbReference>
<dbReference type="IntAct" id="Q9BW61">
    <property type="interactions" value="109"/>
</dbReference>
<dbReference type="MINT" id="Q9BW61"/>
<dbReference type="STRING" id="9606.ENSP00000352928"/>
<dbReference type="iPTMnet" id="Q9BW61"/>
<dbReference type="PhosphoSitePlus" id="Q9BW61"/>
<dbReference type="BioMuta" id="DDA1"/>
<dbReference type="DMDM" id="74733400"/>
<dbReference type="jPOST" id="Q9BW61"/>
<dbReference type="MassIVE" id="Q9BW61"/>
<dbReference type="PaxDb" id="9606-ENSP00000352928"/>
<dbReference type="PeptideAtlas" id="Q9BW61"/>
<dbReference type="ProteomicsDB" id="79255"/>
<dbReference type="Pumba" id="Q9BW61"/>
<dbReference type="TopDownProteomics" id="Q9BW61"/>
<dbReference type="Antibodypedia" id="43757">
    <property type="antibodies" value="166 antibodies from 26 providers"/>
</dbReference>
<dbReference type="DNASU" id="79016"/>
<dbReference type="Ensembl" id="ENST00000359866.9">
    <property type="protein sequence ID" value="ENSP00000352928.3"/>
    <property type="gene ID" value="ENSG00000130311.11"/>
</dbReference>
<dbReference type="Ensembl" id="ENST00000593466.5">
    <property type="protein sequence ID" value="ENSP00000473086.1"/>
    <property type="gene ID" value="ENSG00000130311.11"/>
</dbReference>
<dbReference type="Ensembl" id="ENST00000596582.1">
    <property type="protein sequence ID" value="ENSP00000472171.1"/>
    <property type="gene ID" value="ENSG00000130311.11"/>
</dbReference>
<dbReference type="GeneID" id="79016"/>
<dbReference type="KEGG" id="hsa:79016"/>
<dbReference type="MANE-Select" id="ENST00000359866.9">
    <property type="protein sequence ID" value="ENSP00000352928.3"/>
    <property type="RefSeq nucleotide sequence ID" value="NM_024050.6"/>
    <property type="RefSeq protein sequence ID" value="NP_076955.1"/>
</dbReference>
<dbReference type="UCSC" id="uc002ngd.4">
    <property type="organism name" value="human"/>
</dbReference>
<dbReference type="AGR" id="HGNC:28360"/>
<dbReference type="CTD" id="79016"/>
<dbReference type="DisGeNET" id="79016"/>
<dbReference type="GeneCards" id="DDA1"/>
<dbReference type="HGNC" id="HGNC:28360">
    <property type="gene designation" value="DDA1"/>
</dbReference>
<dbReference type="HPA" id="ENSG00000130311">
    <property type="expression patterns" value="Low tissue specificity"/>
</dbReference>
<dbReference type="neXtProt" id="NX_Q9BW61"/>
<dbReference type="OpenTargets" id="ENSG00000130311"/>
<dbReference type="PharmGKB" id="PA162383418"/>
<dbReference type="VEuPathDB" id="HostDB:ENSG00000130311"/>
<dbReference type="eggNOG" id="KOG4816">
    <property type="taxonomic scope" value="Eukaryota"/>
</dbReference>
<dbReference type="GeneTree" id="ENSGT00390000007029"/>
<dbReference type="HOGENOM" id="CLU_144562_1_0_1"/>
<dbReference type="InParanoid" id="Q9BW61"/>
<dbReference type="OMA" id="HANCLCK"/>
<dbReference type="OrthoDB" id="8598182at2759"/>
<dbReference type="PAN-GO" id="Q9BW61">
    <property type="GO annotations" value="2 GO annotations based on evolutionary models"/>
</dbReference>
<dbReference type="PhylomeDB" id="Q9BW61"/>
<dbReference type="TreeFam" id="TF323534"/>
<dbReference type="PathwayCommons" id="Q9BW61"/>
<dbReference type="Reactome" id="R-HSA-8951664">
    <property type="pathway name" value="Neddylation"/>
</dbReference>
<dbReference type="SignaLink" id="Q9BW61"/>
<dbReference type="UniPathway" id="UPA00143"/>
<dbReference type="BioGRID-ORCS" id="79016">
    <property type="hits" value="190 hits in 1162 CRISPR screens"/>
</dbReference>
<dbReference type="ChiTaRS" id="DDA1">
    <property type="organism name" value="human"/>
</dbReference>
<dbReference type="GenomeRNAi" id="79016"/>
<dbReference type="Pharos" id="Q9BW61">
    <property type="development level" value="Tbio"/>
</dbReference>
<dbReference type="PRO" id="PR:Q9BW61"/>
<dbReference type="Proteomes" id="UP000005640">
    <property type="component" value="Chromosome 19"/>
</dbReference>
<dbReference type="RNAct" id="Q9BW61">
    <property type="molecule type" value="protein"/>
</dbReference>
<dbReference type="Bgee" id="ENSG00000130311">
    <property type="expression patterns" value="Expressed in anterior cingulate cortex and 165 other cell types or tissues"/>
</dbReference>
<dbReference type="ExpressionAtlas" id="Q9BW61">
    <property type="expression patterns" value="baseline and differential"/>
</dbReference>
<dbReference type="GO" id="GO:0080008">
    <property type="term" value="C:Cul4-RING E3 ubiquitin ligase complex"/>
    <property type="evidence" value="ECO:0000314"/>
    <property type="project" value="UniProtKB"/>
</dbReference>
<dbReference type="GO" id="GO:0005654">
    <property type="term" value="C:nucleoplasm"/>
    <property type="evidence" value="ECO:0000304"/>
    <property type="project" value="Reactome"/>
</dbReference>
<dbReference type="GO" id="GO:0032436">
    <property type="term" value="P:positive regulation of proteasomal ubiquitin-dependent protein catabolic process"/>
    <property type="evidence" value="ECO:0000318"/>
    <property type="project" value="GO_Central"/>
</dbReference>
<dbReference type="GO" id="GO:0000209">
    <property type="term" value="P:protein polyubiquitination"/>
    <property type="evidence" value="ECO:0000315"/>
    <property type="project" value="UniProtKB"/>
</dbReference>
<dbReference type="InterPro" id="IPR033575">
    <property type="entry name" value="DDA1-like"/>
</dbReference>
<dbReference type="InterPro" id="IPR018276">
    <property type="entry name" value="DDA1_dom"/>
</dbReference>
<dbReference type="PANTHER" id="PTHR31879">
    <property type="entry name" value="DET1- AND DDB1-ASSOCIATED PROTEIN 1"/>
    <property type="match status" value="1"/>
</dbReference>
<dbReference type="PANTHER" id="PTHR31879:SF2">
    <property type="entry name" value="DET1- AND DDB1-ASSOCIATED PROTEIN 1"/>
    <property type="match status" value="1"/>
</dbReference>
<dbReference type="Pfam" id="PF10172">
    <property type="entry name" value="DDA1"/>
    <property type="match status" value="1"/>
</dbReference>
<protein>
    <recommendedName>
        <fullName evidence="9">DET1- and DDB1-associated protein 1</fullName>
    </recommendedName>
    <alternativeName>
        <fullName evidence="10">Placenta cross-immune reaction antigen 1</fullName>
        <shortName evidence="10">PCIA-1</shortName>
    </alternativeName>
</protein>
<accession>Q9BW61</accession>
<name>DDA1_HUMAN</name>
<feature type="initiator methionine" description="Removed" evidence="24">
    <location>
        <position position="1"/>
    </location>
</feature>
<feature type="chain" id="PRO_0000310270" description="DET1- and DDB1-associated protein 1">
    <location>
        <begin position="2"/>
        <end position="102"/>
    </location>
</feature>
<feature type="region of interest" description="Disordered" evidence="1">
    <location>
        <begin position="66"/>
        <end position="102"/>
    </location>
</feature>
<feature type="compositionally biased region" description="Basic and acidic residues" evidence="1">
    <location>
        <begin position="66"/>
        <end position="75"/>
    </location>
</feature>
<feature type="compositionally biased region" description="Basic and acidic residues" evidence="1">
    <location>
        <begin position="91"/>
        <end position="102"/>
    </location>
</feature>
<feature type="modified residue" description="N-acetylalanine" evidence="24">
    <location>
        <position position="2"/>
    </location>
</feature>
<feature type="modified residue" description="Phosphoserine" evidence="22 25 26">
    <location>
        <position position="33"/>
    </location>
</feature>
<feature type="modified residue" description="Phosphoserine" evidence="21 22 23 26">
    <location>
        <position position="95"/>
    </location>
</feature>
<feature type="turn" evidence="28">
    <location>
        <begin position="4"/>
        <end position="7"/>
    </location>
</feature>
<feature type="turn" evidence="28">
    <location>
        <begin position="13"/>
        <end position="18"/>
    </location>
</feature>
<feature type="helix" evidence="28">
    <location>
        <begin position="24"/>
        <end position="27"/>
    </location>
</feature>
<feature type="strand" evidence="27">
    <location>
        <begin position="32"/>
        <end position="34"/>
    </location>
</feature>
<feature type="strand" evidence="28">
    <location>
        <begin position="46"/>
        <end position="49"/>
    </location>
</feature>
<feature type="helix" evidence="27">
    <location>
        <begin position="54"/>
        <end position="68"/>
    </location>
</feature>
<feature type="turn" evidence="27">
    <location>
        <begin position="69"/>
        <end position="72"/>
    </location>
</feature>
<sequence length="102" mass="11835">MADFLKGLPVYNKSNFSRFHADSVCKASNRRPSVYLPTREYPSEQIIVTEKTNILLRYLHQQWDKKNAAKKRDQEQVELEGESSAPPRKVARTDSPDMHEDT</sequence>